<dbReference type="GO" id="GO:0005576">
    <property type="term" value="C:extracellular region"/>
    <property type="evidence" value="ECO:0007669"/>
    <property type="project" value="UniProtKB-SubCell"/>
</dbReference>
<dbReference type="GO" id="GO:0007218">
    <property type="term" value="P:neuropeptide signaling pathway"/>
    <property type="evidence" value="ECO:0007669"/>
    <property type="project" value="UniProtKB-KW"/>
</dbReference>
<feature type="peptide" id="PRO_0000421599" description="Pyrokinin-3" evidence="3">
    <location>
        <begin position="1"/>
        <end position="8"/>
    </location>
</feature>
<feature type="modified residue" description="Methionine amide" evidence="3">
    <location>
        <position position="8"/>
    </location>
</feature>
<protein>
    <recommendedName>
        <fullName evidence="4">Pyrokinin-3</fullName>
        <shortName evidence="4">PK-3</shortName>
    </recommendedName>
</protein>
<sequence>DPPFAPRM</sequence>
<reference evidence="5" key="1">
    <citation type="journal article" date="2012" name="Syst. Biol.">
        <title>Peptidomics-based phylogeny and biogeography of Mantophasmatodea (Hexapoda).</title>
        <authorList>
            <person name="Predel R."/>
            <person name="Neupert S."/>
            <person name="Huetteroth W."/>
            <person name="Kahnt J."/>
            <person name="Waidelich D."/>
            <person name="Roth S."/>
        </authorList>
    </citation>
    <scope>PROTEIN SEQUENCE</scope>
    <scope>AMIDATION AT MET-8</scope>
    <source>
        <tissue evidence="3">Corpora cardiaca</tissue>
    </source>
</reference>
<keyword id="KW-0027">Amidation</keyword>
<keyword id="KW-0903">Direct protein sequencing</keyword>
<keyword id="KW-0527">Neuropeptide</keyword>
<keyword id="KW-0964">Secreted</keyword>
<accession>B3A0G8</accession>
<organism>
    <name type="scientific">Praedatophasma maraisi</name>
    <name type="common">Gladiator</name>
    <name type="synonym">Heel-walker</name>
    <dbReference type="NCBI Taxonomy" id="409170"/>
    <lineage>
        <taxon>Eukaryota</taxon>
        <taxon>Metazoa</taxon>
        <taxon>Ecdysozoa</taxon>
        <taxon>Arthropoda</taxon>
        <taxon>Hexapoda</taxon>
        <taxon>Insecta</taxon>
        <taxon>Pterygota</taxon>
        <taxon>Neoptera</taxon>
        <taxon>Polyneoptera</taxon>
        <taxon>Mantophasmatodea</taxon>
        <taxon>Mantophasmatidae</taxon>
        <taxon>Praedatophasma</taxon>
    </lineage>
</organism>
<name>PPK3_PRAMA</name>
<proteinExistence type="evidence at protein level"/>
<comment type="function">
    <text evidence="1">Myoactive.</text>
</comment>
<comment type="subcellular location">
    <subcellularLocation>
        <location evidence="6">Secreted</location>
    </subcellularLocation>
</comment>
<comment type="similarity">
    <text evidence="2">Belongs to the pyrokinin family.</text>
</comment>
<evidence type="ECO:0000250" key="1">
    <source>
        <dbReference type="UniProtKB" id="P82619"/>
    </source>
</evidence>
<evidence type="ECO:0000255" key="2"/>
<evidence type="ECO:0000269" key="3">
    <source>
    </source>
</evidence>
<evidence type="ECO:0000303" key="4">
    <source>
    </source>
</evidence>
<evidence type="ECO:0000305" key="5"/>
<evidence type="ECO:0000305" key="6">
    <source>
    </source>
</evidence>